<keyword id="KW-1185">Reference proteome</keyword>
<keyword id="KW-0687">Ribonucleoprotein</keyword>
<keyword id="KW-0689">Ribosomal protein</keyword>
<keyword id="KW-0694">RNA-binding</keyword>
<keyword id="KW-0699">rRNA-binding</keyword>
<keyword id="KW-0820">tRNA-binding</keyword>
<dbReference type="EMBL" id="CP001196">
    <property type="protein sequence ID" value="ACI92801.1"/>
    <property type="molecule type" value="Genomic_DNA"/>
</dbReference>
<dbReference type="EMBL" id="CP002826">
    <property type="protein sequence ID" value="AEI07034.1"/>
    <property type="molecule type" value="Genomic_DNA"/>
</dbReference>
<dbReference type="RefSeq" id="WP_012562830.1">
    <property type="nucleotide sequence ID" value="NC_015684.1"/>
</dbReference>
<dbReference type="SMR" id="B6JES9"/>
<dbReference type="STRING" id="504832.OCA5_c23340"/>
<dbReference type="KEGG" id="oca:OCAR_5673"/>
<dbReference type="KEGG" id="ocg:OCA5_c23340"/>
<dbReference type="PATRIC" id="fig|504832.7.peg.2459"/>
<dbReference type="eggNOG" id="COG0049">
    <property type="taxonomic scope" value="Bacteria"/>
</dbReference>
<dbReference type="HOGENOM" id="CLU_072226_1_1_5"/>
<dbReference type="OrthoDB" id="9807653at2"/>
<dbReference type="Proteomes" id="UP000007730">
    <property type="component" value="Chromosome"/>
</dbReference>
<dbReference type="GO" id="GO:0015935">
    <property type="term" value="C:small ribosomal subunit"/>
    <property type="evidence" value="ECO:0007669"/>
    <property type="project" value="InterPro"/>
</dbReference>
<dbReference type="GO" id="GO:0019843">
    <property type="term" value="F:rRNA binding"/>
    <property type="evidence" value="ECO:0007669"/>
    <property type="project" value="UniProtKB-UniRule"/>
</dbReference>
<dbReference type="GO" id="GO:0003735">
    <property type="term" value="F:structural constituent of ribosome"/>
    <property type="evidence" value="ECO:0007669"/>
    <property type="project" value="InterPro"/>
</dbReference>
<dbReference type="GO" id="GO:0000049">
    <property type="term" value="F:tRNA binding"/>
    <property type="evidence" value="ECO:0007669"/>
    <property type="project" value="UniProtKB-UniRule"/>
</dbReference>
<dbReference type="GO" id="GO:0006412">
    <property type="term" value="P:translation"/>
    <property type="evidence" value="ECO:0007669"/>
    <property type="project" value="UniProtKB-UniRule"/>
</dbReference>
<dbReference type="CDD" id="cd14869">
    <property type="entry name" value="uS7_Bacteria"/>
    <property type="match status" value="1"/>
</dbReference>
<dbReference type="FunFam" id="1.10.455.10:FF:000001">
    <property type="entry name" value="30S ribosomal protein S7"/>
    <property type="match status" value="1"/>
</dbReference>
<dbReference type="Gene3D" id="1.10.455.10">
    <property type="entry name" value="Ribosomal protein S7 domain"/>
    <property type="match status" value="1"/>
</dbReference>
<dbReference type="HAMAP" id="MF_00480_B">
    <property type="entry name" value="Ribosomal_uS7_B"/>
    <property type="match status" value="1"/>
</dbReference>
<dbReference type="InterPro" id="IPR000235">
    <property type="entry name" value="Ribosomal_uS7"/>
</dbReference>
<dbReference type="InterPro" id="IPR005717">
    <property type="entry name" value="Ribosomal_uS7_bac/org-type"/>
</dbReference>
<dbReference type="InterPro" id="IPR020606">
    <property type="entry name" value="Ribosomal_uS7_CS"/>
</dbReference>
<dbReference type="InterPro" id="IPR023798">
    <property type="entry name" value="Ribosomal_uS7_dom"/>
</dbReference>
<dbReference type="InterPro" id="IPR036823">
    <property type="entry name" value="Ribosomal_uS7_dom_sf"/>
</dbReference>
<dbReference type="NCBIfam" id="TIGR01029">
    <property type="entry name" value="rpsG_bact"/>
    <property type="match status" value="1"/>
</dbReference>
<dbReference type="PANTHER" id="PTHR11205">
    <property type="entry name" value="RIBOSOMAL PROTEIN S7"/>
    <property type="match status" value="1"/>
</dbReference>
<dbReference type="Pfam" id="PF00177">
    <property type="entry name" value="Ribosomal_S7"/>
    <property type="match status" value="1"/>
</dbReference>
<dbReference type="PIRSF" id="PIRSF002122">
    <property type="entry name" value="RPS7p_RPS7a_RPS5e_RPS7o"/>
    <property type="match status" value="1"/>
</dbReference>
<dbReference type="SUPFAM" id="SSF47973">
    <property type="entry name" value="Ribosomal protein S7"/>
    <property type="match status" value="1"/>
</dbReference>
<dbReference type="PROSITE" id="PS00052">
    <property type="entry name" value="RIBOSOMAL_S7"/>
    <property type="match status" value="1"/>
</dbReference>
<evidence type="ECO:0000255" key="1">
    <source>
        <dbReference type="HAMAP-Rule" id="MF_00480"/>
    </source>
</evidence>
<evidence type="ECO:0000305" key="2"/>
<sequence length="156" mass="17734">MSRRHSAEKREVNPDPKFGNIVISKFMNSIMYDGKKSVAENIVYGALDTIEAKTKQSPLSVFEQALENVMPTIEVRSRRVGGATYQVPVEVRSTRRQALGIRWIIAAARGRNEKTMTERLSAELLDASNNRGNAVKKREDVHKMAEANRAFSHYRW</sequence>
<reference key="1">
    <citation type="journal article" date="2008" name="J. Bacteriol.">
        <title>Genome sequence of the chemolithoautotrophic bacterium Oligotropha carboxidovorans OM5T.</title>
        <authorList>
            <person name="Paul D."/>
            <person name="Bridges S."/>
            <person name="Burgess S.C."/>
            <person name="Dandass Y."/>
            <person name="Lawrence M.L."/>
        </authorList>
    </citation>
    <scope>NUCLEOTIDE SEQUENCE [LARGE SCALE GENOMIC DNA]</scope>
    <source>
        <strain>ATCC 49405 / DSM 1227 / KCTC 32145 / OM5</strain>
    </source>
</reference>
<reference key="2">
    <citation type="journal article" date="2011" name="J. Bacteriol.">
        <title>Complete genome sequences of the chemolithoautotrophic Oligotropha carboxidovorans strains OM4 and OM5.</title>
        <authorList>
            <person name="Volland S."/>
            <person name="Rachinger M."/>
            <person name="Strittmatter A."/>
            <person name="Daniel R."/>
            <person name="Gottschalk G."/>
            <person name="Meyer O."/>
        </authorList>
    </citation>
    <scope>NUCLEOTIDE SEQUENCE [LARGE SCALE GENOMIC DNA]</scope>
    <source>
        <strain>ATCC 49405 / DSM 1227 / KCTC 32145 / OM5</strain>
    </source>
</reference>
<protein>
    <recommendedName>
        <fullName evidence="1">Small ribosomal subunit protein uS7</fullName>
    </recommendedName>
    <alternativeName>
        <fullName evidence="2">30S ribosomal protein S7</fullName>
    </alternativeName>
</protein>
<accession>B6JES9</accession>
<accession>F8BZD1</accession>
<feature type="chain" id="PRO_1000125976" description="Small ribosomal subunit protein uS7">
    <location>
        <begin position="1"/>
        <end position="156"/>
    </location>
</feature>
<organism>
    <name type="scientific">Afipia carboxidovorans (strain ATCC 49405 / DSM 1227 / KCTC 32145 / OM5)</name>
    <name type="common">Oligotropha carboxidovorans</name>
    <dbReference type="NCBI Taxonomy" id="504832"/>
    <lineage>
        <taxon>Bacteria</taxon>
        <taxon>Pseudomonadati</taxon>
        <taxon>Pseudomonadota</taxon>
        <taxon>Alphaproteobacteria</taxon>
        <taxon>Hyphomicrobiales</taxon>
        <taxon>Nitrobacteraceae</taxon>
        <taxon>Afipia</taxon>
    </lineage>
</organism>
<proteinExistence type="inferred from homology"/>
<comment type="function">
    <text evidence="1">One of the primary rRNA binding proteins, it binds directly to 16S rRNA where it nucleates assembly of the head domain of the 30S subunit. Is located at the subunit interface close to the decoding center, probably blocks exit of the E-site tRNA.</text>
</comment>
<comment type="subunit">
    <text evidence="1">Part of the 30S ribosomal subunit. Contacts proteins S9 and S11.</text>
</comment>
<comment type="similarity">
    <text evidence="1">Belongs to the universal ribosomal protein uS7 family.</text>
</comment>
<name>RS7_AFIC5</name>
<gene>
    <name evidence="1" type="primary">rpsG</name>
    <name type="ordered locus">OCAR_5673</name>
    <name type="ordered locus">OCA5_c23340</name>
</gene>